<organism>
    <name type="scientific">Salmonella heidelberg (strain SL476)</name>
    <dbReference type="NCBI Taxonomy" id="454169"/>
    <lineage>
        <taxon>Bacteria</taxon>
        <taxon>Pseudomonadati</taxon>
        <taxon>Pseudomonadota</taxon>
        <taxon>Gammaproteobacteria</taxon>
        <taxon>Enterobacterales</taxon>
        <taxon>Enterobacteriaceae</taxon>
        <taxon>Salmonella</taxon>
    </lineage>
</organism>
<feature type="chain" id="PRO_1000145877" description="NADH-quinone oxidoreductase subunit N">
    <location>
        <begin position="1"/>
        <end position="485"/>
    </location>
</feature>
<feature type="transmembrane region" description="Helical" evidence="1">
    <location>
        <begin position="8"/>
        <end position="28"/>
    </location>
</feature>
<feature type="transmembrane region" description="Helical" evidence="1">
    <location>
        <begin position="35"/>
        <end position="55"/>
    </location>
</feature>
<feature type="transmembrane region" description="Helical" evidence="1">
    <location>
        <begin position="71"/>
        <end position="91"/>
    </location>
</feature>
<feature type="transmembrane region" description="Helical" evidence="1">
    <location>
        <begin position="105"/>
        <end position="125"/>
    </location>
</feature>
<feature type="transmembrane region" description="Helical" evidence="1">
    <location>
        <begin position="127"/>
        <end position="147"/>
    </location>
</feature>
<feature type="transmembrane region" description="Helical" evidence="1">
    <location>
        <begin position="159"/>
        <end position="179"/>
    </location>
</feature>
<feature type="transmembrane region" description="Helical" evidence="1">
    <location>
        <begin position="203"/>
        <end position="223"/>
    </location>
</feature>
<feature type="transmembrane region" description="Helical" evidence="1">
    <location>
        <begin position="235"/>
        <end position="255"/>
    </location>
</feature>
<feature type="transmembrane region" description="Helical" evidence="1">
    <location>
        <begin position="271"/>
        <end position="291"/>
    </location>
</feature>
<feature type="transmembrane region" description="Helical" evidence="1">
    <location>
        <begin position="297"/>
        <end position="317"/>
    </location>
</feature>
<feature type="transmembrane region" description="Helical" evidence="1">
    <location>
        <begin position="326"/>
        <end position="346"/>
    </location>
</feature>
<feature type="transmembrane region" description="Helical" evidence="1">
    <location>
        <begin position="373"/>
        <end position="393"/>
    </location>
</feature>
<feature type="transmembrane region" description="Helical" evidence="1">
    <location>
        <begin position="408"/>
        <end position="430"/>
    </location>
</feature>
<feature type="transmembrane region" description="Helical" evidence="1">
    <location>
        <begin position="455"/>
        <end position="475"/>
    </location>
</feature>
<keyword id="KW-0997">Cell inner membrane</keyword>
<keyword id="KW-1003">Cell membrane</keyword>
<keyword id="KW-0472">Membrane</keyword>
<keyword id="KW-0520">NAD</keyword>
<keyword id="KW-0874">Quinone</keyword>
<keyword id="KW-1278">Translocase</keyword>
<keyword id="KW-0812">Transmembrane</keyword>
<keyword id="KW-1133">Transmembrane helix</keyword>
<keyword id="KW-0813">Transport</keyword>
<keyword id="KW-0830">Ubiquinone</keyword>
<proteinExistence type="inferred from homology"/>
<comment type="function">
    <text evidence="1">NDH-1 shuttles electrons from NADH, via FMN and iron-sulfur (Fe-S) centers, to quinones in the respiratory chain. The immediate electron acceptor for the enzyme in this species is believed to be ubiquinone. Couples the redox reaction to proton translocation (for every two electrons transferred, four hydrogen ions are translocated across the cytoplasmic membrane), and thus conserves the redox energy in a proton gradient.</text>
</comment>
<comment type="catalytic activity">
    <reaction evidence="1">
        <text>a quinone + NADH + 5 H(+)(in) = a quinol + NAD(+) + 4 H(+)(out)</text>
        <dbReference type="Rhea" id="RHEA:57888"/>
        <dbReference type="ChEBI" id="CHEBI:15378"/>
        <dbReference type="ChEBI" id="CHEBI:24646"/>
        <dbReference type="ChEBI" id="CHEBI:57540"/>
        <dbReference type="ChEBI" id="CHEBI:57945"/>
        <dbReference type="ChEBI" id="CHEBI:132124"/>
    </reaction>
</comment>
<comment type="subunit">
    <text evidence="1">NDH-1 is composed of 13 different subunits. Subunits NuoA, H, J, K, L, M, N constitute the membrane sector of the complex.</text>
</comment>
<comment type="subcellular location">
    <subcellularLocation>
        <location evidence="1">Cell inner membrane</location>
        <topology evidence="1">Multi-pass membrane protein</topology>
    </subcellularLocation>
</comment>
<comment type="similarity">
    <text evidence="1">Belongs to the complex I subunit 2 family.</text>
</comment>
<sequence>MTITPQHLIALLPLLIVGLTVVVVMLSIAWRRNHFLNATLSVIGLNAALVSLWFVGQAGAMDVTPLMRVDGFAMLYTGLVLLASLATCTFAYPWLEGYNDNQEEFYLLVLIASLGGILLANANHLAALFLGIELISLPLFGLIGYAFRQKRSLEASIKYTILSAAASSFLLFGMALVYAQSGNLSFEALGKSLGDGMLHEPLLLAGFGLMIVGLGFKLSLVPFHLWTPDVYQGAPAPVSTFLATASKIAIFGVVMRLFLYAPVGDSEAVRVVLGIIAFASIIFGNLMALSQTNIKRLLGYSSISHLGYLLVALIALQSGEMSMEAVGVYLAGYLFSSLGAFGVVSLMSSPFRGPDADSLYSYRGLFWHRPVLAAVMTVMMLSLAGIPMTLGFIGKFYVLAVGVQASLWWLVAAVVVGSAIGLYYYLRVAVSLYLHAPQQPGRDAPTNWQYSAGGIVVLISALLVLVLGVWPQPLISLVQLATPLM</sequence>
<gene>
    <name evidence="1" type="primary">nuoN</name>
    <name type="ordered locus">SeHA_C2555</name>
</gene>
<reference key="1">
    <citation type="journal article" date="2011" name="J. Bacteriol.">
        <title>Comparative genomics of 28 Salmonella enterica isolates: evidence for CRISPR-mediated adaptive sublineage evolution.</title>
        <authorList>
            <person name="Fricke W.F."/>
            <person name="Mammel M.K."/>
            <person name="McDermott P.F."/>
            <person name="Tartera C."/>
            <person name="White D.G."/>
            <person name="Leclerc J.E."/>
            <person name="Ravel J."/>
            <person name="Cebula T.A."/>
        </authorList>
    </citation>
    <scope>NUCLEOTIDE SEQUENCE [LARGE SCALE GENOMIC DNA]</scope>
    <source>
        <strain>SL476</strain>
    </source>
</reference>
<name>NUON_SALHS</name>
<protein>
    <recommendedName>
        <fullName evidence="1">NADH-quinone oxidoreductase subunit N</fullName>
        <ecNumber evidence="1">7.1.1.-</ecNumber>
    </recommendedName>
    <alternativeName>
        <fullName evidence="1">NADH dehydrogenase I subunit N</fullName>
    </alternativeName>
    <alternativeName>
        <fullName evidence="1">NDH-1 subunit N</fullName>
    </alternativeName>
</protein>
<accession>B4TBI2</accession>
<evidence type="ECO:0000255" key="1">
    <source>
        <dbReference type="HAMAP-Rule" id="MF_00445"/>
    </source>
</evidence>
<dbReference type="EC" id="7.1.1.-" evidence="1"/>
<dbReference type="EMBL" id="CP001120">
    <property type="protein sequence ID" value="ACF66053.1"/>
    <property type="molecule type" value="Genomic_DNA"/>
</dbReference>
<dbReference type="RefSeq" id="WP_000156669.1">
    <property type="nucleotide sequence ID" value="NC_011083.1"/>
</dbReference>
<dbReference type="SMR" id="B4TBI2"/>
<dbReference type="KEGG" id="seh:SeHA_C2555"/>
<dbReference type="HOGENOM" id="CLU_007100_1_5_6"/>
<dbReference type="Proteomes" id="UP000001866">
    <property type="component" value="Chromosome"/>
</dbReference>
<dbReference type="GO" id="GO:0005886">
    <property type="term" value="C:plasma membrane"/>
    <property type="evidence" value="ECO:0007669"/>
    <property type="project" value="UniProtKB-SubCell"/>
</dbReference>
<dbReference type="GO" id="GO:0008137">
    <property type="term" value="F:NADH dehydrogenase (ubiquinone) activity"/>
    <property type="evidence" value="ECO:0007669"/>
    <property type="project" value="InterPro"/>
</dbReference>
<dbReference type="GO" id="GO:0050136">
    <property type="term" value="F:NADH:ubiquinone reductase (non-electrogenic) activity"/>
    <property type="evidence" value="ECO:0007669"/>
    <property type="project" value="UniProtKB-UniRule"/>
</dbReference>
<dbReference type="GO" id="GO:0048038">
    <property type="term" value="F:quinone binding"/>
    <property type="evidence" value="ECO:0007669"/>
    <property type="project" value="UniProtKB-KW"/>
</dbReference>
<dbReference type="GO" id="GO:0042773">
    <property type="term" value="P:ATP synthesis coupled electron transport"/>
    <property type="evidence" value="ECO:0007669"/>
    <property type="project" value="InterPro"/>
</dbReference>
<dbReference type="HAMAP" id="MF_00445">
    <property type="entry name" value="NDH1_NuoN_1"/>
    <property type="match status" value="1"/>
</dbReference>
<dbReference type="InterPro" id="IPR010096">
    <property type="entry name" value="NADH-Q_OxRdtase_suN/2"/>
</dbReference>
<dbReference type="InterPro" id="IPR001750">
    <property type="entry name" value="ND/Mrp_TM"/>
</dbReference>
<dbReference type="NCBIfam" id="TIGR01770">
    <property type="entry name" value="NDH_I_N"/>
    <property type="match status" value="1"/>
</dbReference>
<dbReference type="NCBIfam" id="NF004439">
    <property type="entry name" value="PRK05777.1-1"/>
    <property type="match status" value="1"/>
</dbReference>
<dbReference type="PANTHER" id="PTHR22773">
    <property type="entry name" value="NADH DEHYDROGENASE"/>
    <property type="match status" value="1"/>
</dbReference>
<dbReference type="Pfam" id="PF00361">
    <property type="entry name" value="Proton_antipo_M"/>
    <property type="match status" value="1"/>
</dbReference>